<accession>B8G6R5</accession>
<evidence type="ECO:0000255" key="1">
    <source>
        <dbReference type="HAMAP-Rule" id="MF_01367"/>
    </source>
</evidence>
<evidence type="ECO:0000305" key="2"/>
<reference key="1">
    <citation type="submission" date="2008-12" db="EMBL/GenBank/DDBJ databases">
        <title>Complete sequence of Chloroflexus aggregans DSM 9485.</title>
        <authorList>
            <consortium name="US DOE Joint Genome Institute"/>
            <person name="Lucas S."/>
            <person name="Copeland A."/>
            <person name="Lapidus A."/>
            <person name="Glavina del Rio T."/>
            <person name="Dalin E."/>
            <person name="Tice H."/>
            <person name="Pitluck S."/>
            <person name="Foster B."/>
            <person name="Larimer F."/>
            <person name="Land M."/>
            <person name="Hauser L."/>
            <person name="Kyrpides N."/>
            <person name="Mikhailova N."/>
            <person name="Bryant D.A."/>
            <person name="Richardson P."/>
        </authorList>
    </citation>
    <scope>NUCLEOTIDE SEQUENCE [LARGE SCALE GENOMIC DNA]</scope>
    <source>
        <strain>MD-66 / DSM 9485</strain>
    </source>
</reference>
<protein>
    <recommendedName>
        <fullName evidence="1">Large ribosomal subunit protein uL14</fullName>
    </recommendedName>
    <alternativeName>
        <fullName evidence="2">50S ribosomal protein L14</fullName>
    </alternativeName>
</protein>
<feature type="chain" id="PRO_1000166909" description="Large ribosomal subunit protein uL14">
    <location>
        <begin position="1"/>
        <end position="122"/>
    </location>
</feature>
<sequence>MIQPQTRLKVADNTGAKEIMCIRVLGGSRVRYGRVGDIIVASVKEATPGGQVKKGDVVKAVIIRTAKEYGRPDGSHIRFDDNAAVLIGKENNPRGTRIFGPVARELREKQFMRIVSLAPEVL</sequence>
<keyword id="KW-0687">Ribonucleoprotein</keyword>
<keyword id="KW-0689">Ribosomal protein</keyword>
<keyword id="KW-0694">RNA-binding</keyword>
<keyword id="KW-0699">rRNA-binding</keyword>
<proteinExistence type="inferred from homology"/>
<gene>
    <name evidence="1" type="primary">rplN</name>
    <name type="ordered locus">Cagg_3014</name>
</gene>
<organism>
    <name type="scientific">Chloroflexus aggregans (strain MD-66 / DSM 9485)</name>
    <dbReference type="NCBI Taxonomy" id="326427"/>
    <lineage>
        <taxon>Bacteria</taxon>
        <taxon>Bacillati</taxon>
        <taxon>Chloroflexota</taxon>
        <taxon>Chloroflexia</taxon>
        <taxon>Chloroflexales</taxon>
        <taxon>Chloroflexineae</taxon>
        <taxon>Chloroflexaceae</taxon>
        <taxon>Chloroflexus</taxon>
    </lineage>
</organism>
<comment type="function">
    <text evidence="1">Binds to 23S rRNA. Forms part of two intersubunit bridges in the 70S ribosome.</text>
</comment>
<comment type="subunit">
    <text evidence="1">Part of the 50S ribosomal subunit. Forms a cluster with proteins L3 and L19. In the 70S ribosome, L14 and L19 interact and together make contacts with the 16S rRNA in bridges B5 and B8.</text>
</comment>
<comment type="similarity">
    <text evidence="1">Belongs to the universal ribosomal protein uL14 family.</text>
</comment>
<name>RL14_CHLAD</name>
<dbReference type="EMBL" id="CP001337">
    <property type="protein sequence ID" value="ACL25874.1"/>
    <property type="molecule type" value="Genomic_DNA"/>
</dbReference>
<dbReference type="RefSeq" id="WP_015941728.1">
    <property type="nucleotide sequence ID" value="NC_011831.1"/>
</dbReference>
<dbReference type="SMR" id="B8G6R5"/>
<dbReference type="STRING" id="326427.Cagg_3014"/>
<dbReference type="KEGG" id="cag:Cagg_3014"/>
<dbReference type="eggNOG" id="COG0093">
    <property type="taxonomic scope" value="Bacteria"/>
</dbReference>
<dbReference type="HOGENOM" id="CLU_095071_2_1_0"/>
<dbReference type="OrthoDB" id="9806379at2"/>
<dbReference type="Proteomes" id="UP000002508">
    <property type="component" value="Chromosome"/>
</dbReference>
<dbReference type="GO" id="GO:0022625">
    <property type="term" value="C:cytosolic large ribosomal subunit"/>
    <property type="evidence" value="ECO:0007669"/>
    <property type="project" value="TreeGrafter"/>
</dbReference>
<dbReference type="GO" id="GO:0070180">
    <property type="term" value="F:large ribosomal subunit rRNA binding"/>
    <property type="evidence" value="ECO:0007669"/>
    <property type="project" value="TreeGrafter"/>
</dbReference>
<dbReference type="GO" id="GO:0003735">
    <property type="term" value="F:structural constituent of ribosome"/>
    <property type="evidence" value="ECO:0007669"/>
    <property type="project" value="InterPro"/>
</dbReference>
<dbReference type="GO" id="GO:0006412">
    <property type="term" value="P:translation"/>
    <property type="evidence" value="ECO:0007669"/>
    <property type="project" value="UniProtKB-UniRule"/>
</dbReference>
<dbReference type="CDD" id="cd00337">
    <property type="entry name" value="Ribosomal_uL14"/>
    <property type="match status" value="1"/>
</dbReference>
<dbReference type="FunFam" id="2.40.150.20:FF:000001">
    <property type="entry name" value="50S ribosomal protein L14"/>
    <property type="match status" value="1"/>
</dbReference>
<dbReference type="Gene3D" id="2.40.150.20">
    <property type="entry name" value="Ribosomal protein L14"/>
    <property type="match status" value="1"/>
</dbReference>
<dbReference type="HAMAP" id="MF_01367">
    <property type="entry name" value="Ribosomal_uL14"/>
    <property type="match status" value="1"/>
</dbReference>
<dbReference type="InterPro" id="IPR000218">
    <property type="entry name" value="Ribosomal_uL14"/>
</dbReference>
<dbReference type="InterPro" id="IPR005745">
    <property type="entry name" value="Ribosomal_uL14_bac-type"/>
</dbReference>
<dbReference type="InterPro" id="IPR019972">
    <property type="entry name" value="Ribosomal_uL14_CS"/>
</dbReference>
<dbReference type="InterPro" id="IPR036853">
    <property type="entry name" value="Ribosomal_uL14_sf"/>
</dbReference>
<dbReference type="NCBIfam" id="TIGR01067">
    <property type="entry name" value="rplN_bact"/>
    <property type="match status" value="1"/>
</dbReference>
<dbReference type="PANTHER" id="PTHR11761">
    <property type="entry name" value="50S/60S RIBOSOMAL PROTEIN L14/L23"/>
    <property type="match status" value="1"/>
</dbReference>
<dbReference type="PANTHER" id="PTHR11761:SF3">
    <property type="entry name" value="LARGE RIBOSOMAL SUBUNIT PROTEIN UL14M"/>
    <property type="match status" value="1"/>
</dbReference>
<dbReference type="Pfam" id="PF00238">
    <property type="entry name" value="Ribosomal_L14"/>
    <property type="match status" value="1"/>
</dbReference>
<dbReference type="SMART" id="SM01374">
    <property type="entry name" value="Ribosomal_L14"/>
    <property type="match status" value="1"/>
</dbReference>
<dbReference type="SUPFAM" id="SSF50193">
    <property type="entry name" value="Ribosomal protein L14"/>
    <property type="match status" value="1"/>
</dbReference>
<dbReference type="PROSITE" id="PS00049">
    <property type="entry name" value="RIBOSOMAL_L14"/>
    <property type="match status" value="1"/>
</dbReference>